<keyword id="KW-0342">GTP-binding</keyword>
<keyword id="KW-0378">Hydrolase</keyword>
<keyword id="KW-0456">Lyase</keyword>
<keyword id="KW-0460">Magnesium</keyword>
<keyword id="KW-0464">Manganese</keyword>
<keyword id="KW-0479">Metal-binding</keyword>
<keyword id="KW-0511">Multifunctional enzyme</keyword>
<keyword id="KW-0547">Nucleotide-binding</keyword>
<keyword id="KW-1185">Reference proteome</keyword>
<keyword id="KW-0686">Riboflavin biosynthesis</keyword>
<keyword id="KW-0862">Zinc</keyword>
<sequence>MFSSIEEVIQDIKEGKMIVLVDDEDRENEGDVIIAAEKAGPEAINFMATHAKGLICMPIIGERLDELEIHDMVTENTDNHETAFTVTVDYRGTTTGISAFERAATVKALIDSVSKPSDFRKPGHIFPLRYREGGVLRRAGHTEGSIDLTRLAGLYPAAVICEVMNEDGTMARLPQLLEFARQHNLKLASIADLIEYRRRKEKLVVRVTDAQLPTMYGDFVAVAYESLLDNKGHIALVKGEWEEDEPILVRVHSECLTGDVFGSRRCDCGEQLETAMSMIASEGKGVLLYMRQEGRGIGLLNKIKAYKLQDNGRDTVEANLELGFPADLRDYGIGAQILVDLGVRKMRLMTNNPKKIRGLEGYGLEVVERVAIEMPHKPENTRYLRTKKEKMGHLLASL</sequence>
<comment type="function">
    <text evidence="1">Catalyzes the conversion of D-ribulose 5-phosphate to formate and 3,4-dihydroxy-2-butanone 4-phosphate.</text>
</comment>
<comment type="function">
    <text evidence="1">Catalyzes the conversion of GTP to 2,5-diamino-6-ribosylamino-4(3H)-pyrimidinone 5'-phosphate (DARP), formate and pyrophosphate.</text>
</comment>
<comment type="catalytic activity">
    <reaction evidence="1">
        <text>D-ribulose 5-phosphate = (2S)-2-hydroxy-3-oxobutyl phosphate + formate + H(+)</text>
        <dbReference type="Rhea" id="RHEA:18457"/>
        <dbReference type="ChEBI" id="CHEBI:15378"/>
        <dbReference type="ChEBI" id="CHEBI:15740"/>
        <dbReference type="ChEBI" id="CHEBI:58121"/>
        <dbReference type="ChEBI" id="CHEBI:58830"/>
        <dbReference type="EC" id="4.1.99.12"/>
    </reaction>
</comment>
<comment type="catalytic activity">
    <reaction evidence="1">
        <text>GTP + 4 H2O = 2,5-diamino-6-hydroxy-4-(5-phosphoribosylamino)-pyrimidine + formate + 2 phosphate + 3 H(+)</text>
        <dbReference type="Rhea" id="RHEA:23704"/>
        <dbReference type="ChEBI" id="CHEBI:15377"/>
        <dbReference type="ChEBI" id="CHEBI:15378"/>
        <dbReference type="ChEBI" id="CHEBI:15740"/>
        <dbReference type="ChEBI" id="CHEBI:37565"/>
        <dbReference type="ChEBI" id="CHEBI:43474"/>
        <dbReference type="ChEBI" id="CHEBI:58614"/>
        <dbReference type="EC" id="3.5.4.25"/>
    </reaction>
</comment>
<comment type="cofactor">
    <cofactor evidence="1">
        <name>Mg(2+)</name>
        <dbReference type="ChEBI" id="CHEBI:18420"/>
    </cofactor>
    <cofactor evidence="1">
        <name>Mn(2+)</name>
        <dbReference type="ChEBI" id="CHEBI:29035"/>
    </cofactor>
    <text evidence="1">Binds 2 divalent metal cations per subunit. Magnesium or manganese.</text>
</comment>
<comment type="cofactor">
    <cofactor evidence="1">
        <name>Zn(2+)</name>
        <dbReference type="ChEBI" id="CHEBI:29105"/>
    </cofactor>
    <text evidence="1">Binds 1 zinc ion per subunit.</text>
</comment>
<comment type="pathway">
    <text evidence="1">Cofactor biosynthesis; riboflavin biosynthesis; 2-hydroxy-3-oxobutyl phosphate from D-ribulose 5-phosphate: step 1/1.</text>
</comment>
<comment type="pathway">
    <text evidence="1">Cofactor biosynthesis; riboflavin biosynthesis; 5-amino-6-(D-ribitylamino)uracil from GTP: step 1/4.</text>
</comment>
<comment type="similarity">
    <text evidence="1">In the N-terminal section; belongs to the DHBP synthase family.</text>
</comment>
<comment type="similarity">
    <text evidence="1">In the C-terminal section; belongs to the GTP cyclohydrolase II family.</text>
</comment>
<organism>
    <name type="scientific">Syntrophomonas wolfei subsp. wolfei (strain DSM 2245B / Goettingen)</name>
    <dbReference type="NCBI Taxonomy" id="335541"/>
    <lineage>
        <taxon>Bacteria</taxon>
        <taxon>Bacillati</taxon>
        <taxon>Bacillota</taxon>
        <taxon>Clostridia</taxon>
        <taxon>Eubacteriales</taxon>
        <taxon>Syntrophomonadaceae</taxon>
        <taxon>Syntrophomonas</taxon>
    </lineage>
</organism>
<reference key="1">
    <citation type="journal article" date="2010" name="Environ. Microbiol.">
        <title>The genome of Syntrophomonas wolfei: new insights into syntrophic metabolism and biohydrogen production.</title>
        <authorList>
            <person name="Sieber J.R."/>
            <person name="Sims D.R."/>
            <person name="Han C."/>
            <person name="Kim E."/>
            <person name="Lykidis A."/>
            <person name="Lapidus A.L."/>
            <person name="McDonnald E."/>
            <person name="Rohlin L."/>
            <person name="Culley D.E."/>
            <person name="Gunsalus R."/>
            <person name="McInerney M.J."/>
        </authorList>
    </citation>
    <scope>NUCLEOTIDE SEQUENCE [LARGE SCALE GENOMIC DNA]</scope>
    <source>
        <strain>DSM 2245B / Goettingen</strain>
    </source>
</reference>
<protein>
    <recommendedName>
        <fullName evidence="1">Riboflavin biosynthesis protein RibBA</fullName>
    </recommendedName>
    <domain>
        <recommendedName>
            <fullName evidence="1">3,4-dihydroxy-2-butanone 4-phosphate synthase</fullName>
            <shortName evidence="1">DHBP synthase</shortName>
            <ecNumber evidence="1">4.1.99.12</ecNumber>
        </recommendedName>
    </domain>
    <domain>
        <recommendedName>
            <fullName evidence="1">GTP cyclohydrolase-2</fullName>
            <ecNumber evidence="1">3.5.4.25</ecNumber>
        </recommendedName>
        <alternativeName>
            <fullName evidence="1">GTP cyclohydrolase II</fullName>
        </alternativeName>
    </domain>
</protein>
<evidence type="ECO:0000255" key="1">
    <source>
        <dbReference type="HAMAP-Rule" id="MF_01283"/>
    </source>
</evidence>
<proteinExistence type="inferred from homology"/>
<name>RIBBA_SYNWW</name>
<feature type="chain" id="PRO_1000067431" description="Riboflavin biosynthesis protein RibBA">
    <location>
        <begin position="1"/>
        <end position="398"/>
    </location>
</feature>
<feature type="region of interest" description="DHBP synthase">
    <location>
        <begin position="1"/>
        <end position="199"/>
    </location>
</feature>
<feature type="region of interest" description="GTP cyclohydrolase II">
    <location>
        <begin position="200"/>
        <end position="398"/>
    </location>
</feature>
<feature type="active site" description="Proton acceptor; for GTP cyclohydrolase activity" evidence="1">
    <location>
        <position position="327"/>
    </location>
</feature>
<feature type="active site" description="Nucleophile; for GTP cyclohydrolase activity" evidence="1">
    <location>
        <position position="329"/>
    </location>
</feature>
<feature type="binding site" evidence="1">
    <location>
        <begin position="26"/>
        <end position="27"/>
    </location>
    <ligand>
        <name>D-ribulose 5-phosphate</name>
        <dbReference type="ChEBI" id="CHEBI:58121"/>
    </ligand>
</feature>
<feature type="binding site" evidence="1">
    <location>
        <position position="27"/>
    </location>
    <ligand>
        <name>Mg(2+)</name>
        <dbReference type="ChEBI" id="CHEBI:18420"/>
        <label>1</label>
    </ligand>
</feature>
<feature type="binding site" evidence="1">
    <location>
        <position position="27"/>
    </location>
    <ligand>
        <name>Mg(2+)</name>
        <dbReference type="ChEBI" id="CHEBI:18420"/>
        <label>2</label>
    </ligand>
</feature>
<feature type="binding site" evidence="1">
    <location>
        <position position="31"/>
    </location>
    <ligand>
        <name>D-ribulose 5-phosphate</name>
        <dbReference type="ChEBI" id="CHEBI:58121"/>
    </ligand>
</feature>
<feature type="binding site" evidence="1">
    <location>
        <begin position="138"/>
        <end position="142"/>
    </location>
    <ligand>
        <name>D-ribulose 5-phosphate</name>
        <dbReference type="ChEBI" id="CHEBI:58121"/>
    </ligand>
</feature>
<feature type="binding site" evidence="1">
    <location>
        <position position="141"/>
    </location>
    <ligand>
        <name>Mg(2+)</name>
        <dbReference type="ChEBI" id="CHEBI:18420"/>
        <label>2</label>
    </ligand>
</feature>
<feature type="binding site" evidence="1">
    <location>
        <position position="162"/>
    </location>
    <ligand>
        <name>D-ribulose 5-phosphate</name>
        <dbReference type="ChEBI" id="CHEBI:58121"/>
    </ligand>
</feature>
<feature type="binding site" evidence="1">
    <location>
        <begin position="250"/>
        <end position="254"/>
    </location>
    <ligand>
        <name>GTP</name>
        <dbReference type="ChEBI" id="CHEBI:37565"/>
    </ligand>
</feature>
<feature type="binding site" evidence="1">
    <location>
        <position position="255"/>
    </location>
    <ligand>
        <name>Zn(2+)</name>
        <dbReference type="ChEBI" id="CHEBI:29105"/>
        <note>catalytic</note>
    </ligand>
</feature>
<feature type="binding site" evidence="1">
    <location>
        <position position="266"/>
    </location>
    <ligand>
        <name>Zn(2+)</name>
        <dbReference type="ChEBI" id="CHEBI:29105"/>
        <note>catalytic</note>
    </ligand>
</feature>
<feature type="binding site" evidence="1">
    <location>
        <position position="268"/>
    </location>
    <ligand>
        <name>Zn(2+)</name>
        <dbReference type="ChEBI" id="CHEBI:29105"/>
        <note>catalytic</note>
    </ligand>
</feature>
<feature type="binding site" evidence="1">
    <location>
        <position position="271"/>
    </location>
    <ligand>
        <name>GTP</name>
        <dbReference type="ChEBI" id="CHEBI:37565"/>
    </ligand>
</feature>
<feature type="binding site" evidence="1">
    <location>
        <begin position="293"/>
        <end position="295"/>
    </location>
    <ligand>
        <name>GTP</name>
        <dbReference type="ChEBI" id="CHEBI:37565"/>
    </ligand>
</feature>
<feature type="binding site" evidence="1">
    <location>
        <position position="315"/>
    </location>
    <ligand>
        <name>GTP</name>
        <dbReference type="ChEBI" id="CHEBI:37565"/>
    </ligand>
</feature>
<feature type="binding site" evidence="1">
    <location>
        <position position="350"/>
    </location>
    <ligand>
        <name>GTP</name>
        <dbReference type="ChEBI" id="CHEBI:37565"/>
    </ligand>
</feature>
<feature type="binding site" evidence="1">
    <location>
        <position position="355"/>
    </location>
    <ligand>
        <name>GTP</name>
        <dbReference type="ChEBI" id="CHEBI:37565"/>
    </ligand>
</feature>
<feature type="site" description="Essential for DHBP synthase activity" evidence="1">
    <location>
        <position position="124"/>
    </location>
</feature>
<feature type="site" description="Essential for DHBP synthase activity" evidence="1">
    <location>
        <position position="162"/>
    </location>
</feature>
<accession>Q0AXM5</accession>
<dbReference type="EC" id="4.1.99.12" evidence="1"/>
<dbReference type="EC" id="3.5.4.25" evidence="1"/>
<dbReference type="EMBL" id="CP000448">
    <property type="protein sequence ID" value="ABI68529.1"/>
    <property type="molecule type" value="Genomic_DNA"/>
</dbReference>
<dbReference type="RefSeq" id="WP_011640632.1">
    <property type="nucleotide sequence ID" value="NC_008346.1"/>
</dbReference>
<dbReference type="SMR" id="Q0AXM5"/>
<dbReference type="STRING" id="335541.Swol_1220"/>
<dbReference type="KEGG" id="swo:Swol_1220"/>
<dbReference type="eggNOG" id="COG0108">
    <property type="taxonomic scope" value="Bacteria"/>
</dbReference>
<dbReference type="eggNOG" id="COG0807">
    <property type="taxonomic scope" value="Bacteria"/>
</dbReference>
<dbReference type="HOGENOM" id="CLU_020273_1_2_9"/>
<dbReference type="OrthoDB" id="9793111at2"/>
<dbReference type="UniPathway" id="UPA00275">
    <property type="reaction ID" value="UER00399"/>
</dbReference>
<dbReference type="UniPathway" id="UPA00275">
    <property type="reaction ID" value="UER00400"/>
</dbReference>
<dbReference type="Proteomes" id="UP000001968">
    <property type="component" value="Chromosome"/>
</dbReference>
<dbReference type="GO" id="GO:0005829">
    <property type="term" value="C:cytosol"/>
    <property type="evidence" value="ECO:0007669"/>
    <property type="project" value="TreeGrafter"/>
</dbReference>
<dbReference type="GO" id="GO:0008686">
    <property type="term" value="F:3,4-dihydroxy-2-butanone-4-phosphate synthase activity"/>
    <property type="evidence" value="ECO:0007669"/>
    <property type="project" value="UniProtKB-UniRule"/>
</dbReference>
<dbReference type="GO" id="GO:0005525">
    <property type="term" value="F:GTP binding"/>
    <property type="evidence" value="ECO:0007669"/>
    <property type="project" value="UniProtKB-KW"/>
</dbReference>
<dbReference type="GO" id="GO:0003935">
    <property type="term" value="F:GTP cyclohydrolase II activity"/>
    <property type="evidence" value="ECO:0007669"/>
    <property type="project" value="UniProtKB-UniRule"/>
</dbReference>
<dbReference type="GO" id="GO:0000287">
    <property type="term" value="F:magnesium ion binding"/>
    <property type="evidence" value="ECO:0007669"/>
    <property type="project" value="UniProtKB-UniRule"/>
</dbReference>
<dbReference type="GO" id="GO:0030145">
    <property type="term" value="F:manganese ion binding"/>
    <property type="evidence" value="ECO:0007669"/>
    <property type="project" value="UniProtKB-UniRule"/>
</dbReference>
<dbReference type="GO" id="GO:0008270">
    <property type="term" value="F:zinc ion binding"/>
    <property type="evidence" value="ECO:0007669"/>
    <property type="project" value="UniProtKB-UniRule"/>
</dbReference>
<dbReference type="GO" id="GO:0009231">
    <property type="term" value="P:riboflavin biosynthetic process"/>
    <property type="evidence" value="ECO:0007669"/>
    <property type="project" value="UniProtKB-UniRule"/>
</dbReference>
<dbReference type="CDD" id="cd00641">
    <property type="entry name" value="GTP_cyclohydro2"/>
    <property type="match status" value="1"/>
</dbReference>
<dbReference type="FunFam" id="3.40.50.10990:FF:000001">
    <property type="entry name" value="Riboflavin biosynthesis protein RibBA"/>
    <property type="match status" value="1"/>
</dbReference>
<dbReference type="FunFam" id="3.90.870.10:FF:000001">
    <property type="entry name" value="Riboflavin biosynthesis protein RibBA"/>
    <property type="match status" value="1"/>
</dbReference>
<dbReference type="Gene3D" id="3.90.870.10">
    <property type="entry name" value="DHBP synthase"/>
    <property type="match status" value="1"/>
</dbReference>
<dbReference type="Gene3D" id="3.40.50.10990">
    <property type="entry name" value="GTP cyclohydrolase II"/>
    <property type="match status" value="1"/>
</dbReference>
<dbReference type="HAMAP" id="MF_00179">
    <property type="entry name" value="RibA"/>
    <property type="match status" value="1"/>
</dbReference>
<dbReference type="HAMAP" id="MF_00180">
    <property type="entry name" value="RibB"/>
    <property type="match status" value="1"/>
</dbReference>
<dbReference type="HAMAP" id="MF_01283">
    <property type="entry name" value="RibBA"/>
    <property type="match status" value="1"/>
</dbReference>
<dbReference type="InterPro" id="IPR017945">
    <property type="entry name" value="DHBP_synth_RibB-like_a/b_dom"/>
</dbReference>
<dbReference type="InterPro" id="IPR000422">
    <property type="entry name" value="DHBP_synthase_RibB"/>
</dbReference>
<dbReference type="InterPro" id="IPR032677">
    <property type="entry name" value="GTP_cyclohydro_II"/>
</dbReference>
<dbReference type="InterPro" id="IPR000926">
    <property type="entry name" value="RibA"/>
</dbReference>
<dbReference type="InterPro" id="IPR036144">
    <property type="entry name" value="RibA-like_sf"/>
</dbReference>
<dbReference type="InterPro" id="IPR016299">
    <property type="entry name" value="Riboflavin_synth_RibBA"/>
</dbReference>
<dbReference type="NCBIfam" id="NF001591">
    <property type="entry name" value="PRK00393.1"/>
    <property type="match status" value="1"/>
</dbReference>
<dbReference type="NCBIfam" id="NF006803">
    <property type="entry name" value="PRK09311.1"/>
    <property type="match status" value="1"/>
</dbReference>
<dbReference type="NCBIfam" id="TIGR00505">
    <property type="entry name" value="ribA"/>
    <property type="match status" value="1"/>
</dbReference>
<dbReference type="NCBIfam" id="TIGR00506">
    <property type="entry name" value="ribB"/>
    <property type="match status" value="1"/>
</dbReference>
<dbReference type="PANTHER" id="PTHR21327:SF18">
    <property type="entry name" value="3,4-DIHYDROXY-2-BUTANONE 4-PHOSPHATE SYNTHASE"/>
    <property type="match status" value="1"/>
</dbReference>
<dbReference type="PANTHER" id="PTHR21327">
    <property type="entry name" value="GTP CYCLOHYDROLASE II-RELATED"/>
    <property type="match status" value="1"/>
</dbReference>
<dbReference type="Pfam" id="PF00926">
    <property type="entry name" value="DHBP_synthase"/>
    <property type="match status" value="1"/>
</dbReference>
<dbReference type="Pfam" id="PF00925">
    <property type="entry name" value="GTP_cyclohydro2"/>
    <property type="match status" value="1"/>
</dbReference>
<dbReference type="PIRSF" id="PIRSF001259">
    <property type="entry name" value="RibA"/>
    <property type="match status" value="1"/>
</dbReference>
<dbReference type="SUPFAM" id="SSF142695">
    <property type="entry name" value="RibA-like"/>
    <property type="match status" value="1"/>
</dbReference>
<dbReference type="SUPFAM" id="SSF55821">
    <property type="entry name" value="YrdC/RibB"/>
    <property type="match status" value="1"/>
</dbReference>
<gene>
    <name evidence="1" type="primary">ribBA</name>
    <name type="ordered locus">Swol_1220</name>
</gene>